<gene>
    <name type="primary">yhzF</name>
    <name type="ordered locus">BSU10009</name>
</gene>
<protein>
    <recommendedName>
        <fullName>Uncharacterized membrane protein YhzF</fullName>
    </recommendedName>
</protein>
<keyword id="KW-1003">Cell membrane</keyword>
<keyword id="KW-0472">Membrane</keyword>
<keyword id="KW-1185">Reference proteome</keyword>
<keyword id="KW-0812">Transmembrane</keyword>
<keyword id="KW-1133">Transmembrane helix</keyword>
<organism>
    <name type="scientific">Bacillus subtilis (strain 168)</name>
    <dbReference type="NCBI Taxonomy" id="224308"/>
    <lineage>
        <taxon>Bacteria</taxon>
        <taxon>Bacillati</taxon>
        <taxon>Bacillota</taxon>
        <taxon>Bacilli</taxon>
        <taxon>Bacillales</taxon>
        <taxon>Bacillaceae</taxon>
        <taxon>Bacillus</taxon>
    </lineage>
</organism>
<feature type="chain" id="PRO_0000382206" description="Uncharacterized membrane protein YhzF">
    <location>
        <begin position="1"/>
        <end position="63"/>
    </location>
</feature>
<feature type="transmembrane region" description="Helical" evidence="1">
    <location>
        <begin position="3"/>
        <end position="23"/>
    </location>
</feature>
<feature type="transmembrane region" description="Helical" evidence="1">
    <location>
        <begin position="42"/>
        <end position="62"/>
    </location>
</feature>
<evidence type="ECO:0000255" key="1"/>
<evidence type="ECO:0000305" key="2"/>
<comment type="subcellular location">
    <subcellularLocation>
        <location evidence="2">Cell membrane</location>
        <topology evidence="2">Multi-pass membrane protein</topology>
    </subcellularLocation>
</comment>
<accession>C0H3Y3</accession>
<reference key="1">
    <citation type="journal article" date="1997" name="Nature">
        <title>The complete genome sequence of the Gram-positive bacterium Bacillus subtilis.</title>
        <authorList>
            <person name="Kunst F."/>
            <person name="Ogasawara N."/>
            <person name="Moszer I."/>
            <person name="Albertini A.M."/>
            <person name="Alloni G."/>
            <person name="Azevedo V."/>
            <person name="Bertero M.G."/>
            <person name="Bessieres P."/>
            <person name="Bolotin A."/>
            <person name="Borchert S."/>
            <person name="Borriss R."/>
            <person name="Boursier L."/>
            <person name="Brans A."/>
            <person name="Braun M."/>
            <person name="Brignell S.C."/>
            <person name="Bron S."/>
            <person name="Brouillet S."/>
            <person name="Bruschi C.V."/>
            <person name="Caldwell B."/>
            <person name="Capuano V."/>
            <person name="Carter N.M."/>
            <person name="Choi S.-K."/>
            <person name="Codani J.-J."/>
            <person name="Connerton I.F."/>
            <person name="Cummings N.J."/>
            <person name="Daniel R.A."/>
            <person name="Denizot F."/>
            <person name="Devine K.M."/>
            <person name="Duesterhoeft A."/>
            <person name="Ehrlich S.D."/>
            <person name="Emmerson P.T."/>
            <person name="Entian K.-D."/>
            <person name="Errington J."/>
            <person name="Fabret C."/>
            <person name="Ferrari E."/>
            <person name="Foulger D."/>
            <person name="Fritz C."/>
            <person name="Fujita M."/>
            <person name="Fujita Y."/>
            <person name="Fuma S."/>
            <person name="Galizzi A."/>
            <person name="Galleron N."/>
            <person name="Ghim S.-Y."/>
            <person name="Glaser P."/>
            <person name="Goffeau A."/>
            <person name="Golightly E.J."/>
            <person name="Grandi G."/>
            <person name="Guiseppi G."/>
            <person name="Guy B.J."/>
            <person name="Haga K."/>
            <person name="Haiech J."/>
            <person name="Harwood C.R."/>
            <person name="Henaut A."/>
            <person name="Hilbert H."/>
            <person name="Holsappel S."/>
            <person name="Hosono S."/>
            <person name="Hullo M.-F."/>
            <person name="Itaya M."/>
            <person name="Jones L.-M."/>
            <person name="Joris B."/>
            <person name="Karamata D."/>
            <person name="Kasahara Y."/>
            <person name="Klaerr-Blanchard M."/>
            <person name="Klein C."/>
            <person name="Kobayashi Y."/>
            <person name="Koetter P."/>
            <person name="Koningstein G."/>
            <person name="Krogh S."/>
            <person name="Kumano M."/>
            <person name="Kurita K."/>
            <person name="Lapidus A."/>
            <person name="Lardinois S."/>
            <person name="Lauber J."/>
            <person name="Lazarevic V."/>
            <person name="Lee S.-M."/>
            <person name="Levine A."/>
            <person name="Liu H."/>
            <person name="Masuda S."/>
            <person name="Mauel C."/>
            <person name="Medigue C."/>
            <person name="Medina N."/>
            <person name="Mellado R.P."/>
            <person name="Mizuno M."/>
            <person name="Moestl D."/>
            <person name="Nakai S."/>
            <person name="Noback M."/>
            <person name="Noone D."/>
            <person name="O'Reilly M."/>
            <person name="Ogawa K."/>
            <person name="Ogiwara A."/>
            <person name="Oudega B."/>
            <person name="Park S.-H."/>
            <person name="Parro V."/>
            <person name="Pohl T.M."/>
            <person name="Portetelle D."/>
            <person name="Porwollik S."/>
            <person name="Prescott A.M."/>
            <person name="Presecan E."/>
            <person name="Pujic P."/>
            <person name="Purnelle B."/>
            <person name="Rapoport G."/>
            <person name="Rey M."/>
            <person name="Reynolds S."/>
            <person name="Rieger M."/>
            <person name="Rivolta C."/>
            <person name="Rocha E."/>
            <person name="Roche B."/>
            <person name="Rose M."/>
            <person name="Sadaie Y."/>
            <person name="Sato T."/>
            <person name="Scanlan E."/>
            <person name="Schleich S."/>
            <person name="Schroeter R."/>
            <person name="Scoffone F."/>
            <person name="Sekiguchi J."/>
            <person name="Sekowska A."/>
            <person name="Seror S.J."/>
            <person name="Serror P."/>
            <person name="Shin B.-S."/>
            <person name="Soldo B."/>
            <person name="Sorokin A."/>
            <person name="Tacconi E."/>
            <person name="Takagi T."/>
            <person name="Takahashi H."/>
            <person name="Takemaru K."/>
            <person name="Takeuchi M."/>
            <person name="Tamakoshi A."/>
            <person name="Tanaka T."/>
            <person name="Terpstra P."/>
            <person name="Tognoni A."/>
            <person name="Tosato V."/>
            <person name="Uchiyama S."/>
            <person name="Vandenbol M."/>
            <person name="Vannier F."/>
            <person name="Vassarotti A."/>
            <person name="Viari A."/>
            <person name="Wambutt R."/>
            <person name="Wedler E."/>
            <person name="Wedler H."/>
            <person name="Weitzenegger T."/>
            <person name="Winters P."/>
            <person name="Wipat A."/>
            <person name="Yamamoto H."/>
            <person name="Yamane K."/>
            <person name="Yasumoto K."/>
            <person name="Yata K."/>
            <person name="Yoshida K."/>
            <person name="Yoshikawa H.-F."/>
            <person name="Zumstein E."/>
            <person name="Yoshikawa H."/>
            <person name="Danchin A."/>
        </authorList>
    </citation>
    <scope>NUCLEOTIDE SEQUENCE [LARGE SCALE GENOMIC DNA]</scope>
    <source>
        <strain>168</strain>
    </source>
</reference>
<dbReference type="EMBL" id="AL009126">
    <property type="protein sequence ID" value="CAX52588.1"/>
    <property type="molecule type" value="Genomic_DNA"/>
</dbReference>
<dbReference type="RefSeq" id="WP_003233238.1">
    <property type="nucleotide sequence ID" value="NZ_OZ025638.1"/>
</dbReference>
<dbReference type="RefSeq" id="YP_003097700.1">
    <property type="nucleotide sequence ID" value="NC_000964.3"/>
</dbReference>
<dbReference type="FunCoup" id="C0H3Y3">
    <property type="interactions" value="4"/>
</dbReference>
<dbReference type="STRING" id="224308.BSU10009"/>
<dbReference type="PaxDb" id="224308-BSU10009"/>
<dbReference type="EnsemblBacteria" id="CAX52588">
    <property type="protein sequence ID" value="CAX52588"/>
    <property type="gene ID" value="BSU_10009"/>
</dbReference>
<dbReference type="GeneID" id="8303073"/>
<dbReference type="KEGG" id="bsu:BSU10009"/>
<dbReference type="PATRIC" id="fig|224308.179.peg.1076"/>
<dbReference type="InParanoid" id="C0H3Y3"/>
<dbReference type="OrthoDB" id="2943546at2"/>
<dbReference type="BioCyc" id="BSUB:BSU10009-MONOMER"/>
<dbReference type="Proteomes" id="UP000001570">
    <property type="component" value="Chromosome"/>
</dbReference>
<dbReference type="GO" id="GO:0005886">
    <property type="term" value="C:plasma membrane"/>
    <property type="evidence" value="ECO:0007669"/>
    <property type="project" value="UniProtKB-SubCell"/>
</dbReference>
<proteinExistence type="predicted"/>
<sequence length="63" mass="6863">MSVFLIVLSCITLAFASGAVYYIKLLSQAASYPPKRVIRQKALVCSTGTAFTLCLIFFTKLLA</sequence>
<name>YHZF_BACSU</name>